<proteinExistence type="inferred from homology"/>
<accession>P13169</accession>
<comment type="function">
    <text evidence="2">Plays an essential role in viral RNA transcription and replication by forming the heterotrimeric polymerase complex together with PB1 and PB2 subunits. The complex transcribes viral mRNAs by using a unique mechanism called cap-snatching. It consists in the hijacking and cleavage of host capped pre-mRNAs. These short capped RNAs are then used as primers for viral mRNAs. The PB2 subunit is responsible for the binding of the 5' cap of cellular pre-mRNAs which are subsequently cleaved after 10-13 nucleotides by the PA subunit that carries the endonuclease activity.</text>
</comment>
<comment type="cofactor">
    <cofactor evidence="2">
        <name>Mn(2+)</name>
        <dbReference type="ChEBI" id="CHEBI:29035"/>
    </cofactor>
    <text evidence="2">Binds 2 manganese ions per subunit.</text>
</comment>
<comment type="subunit">
    <text evidence="1 2">Influenza RNA polymerase is composed of three subunits: PB1, PB2 and PA. Interacts (via C-terminus) with PB1 (via N-terminus).</text>
</comment>
<comment type="subcellular location">
    <subcellularLocation>
        <location evidence="2">Host cytoplasm</location>
    </subcellularLocation>
    <subcellularLocation>
        <location evidence="2">Host nucleus</location>
    </subcellularLocation>
    <text evidence="1 2">PB1 and PA are transported in the host nucleus as a complex.</text>
</comment>
<comment type="alternative products">
    <event type="ribosomal frameshifting"/>
    <isoform>
        <id>P13169-1</id>
        <name>PA</name>
        <sequence type="displayed"/>
    </isoform>
    <isoform>
        <id>P0CK87-1</id>
        <name>PA-X</name>
        <sequence type="external"/>
    </isoform>
</comment>
<comment type="PTM">
    <text evidence="1 2">Phosphorylated on serines and threonines by host kinases, including human casein kinase II.</text>
</comment>
<comment type="similarity">
    <text evidence="2">Belongs to the influenza viruses PA family.</text>
</comment>
<keyword id="KW-1157">Cap snatching</keyword>
<keyword id="KW-0255">Endonuclease</keyword>
<keyword id="KW-1262">Eukaryotic host gene expression shutoff by virus</keyword>
<keyword id="KW-1191">Eukaryotic host transcription shutoff by virus</keyword>
<keyword id="KW-1035">Host cytoplasm</keyword>
<keyword id="KW-1190">Host gene expression shutoff by virus</keyword>
<keyword id="KW-1048">Host nucleus</keyword>
<keyword id="KW-0945">Host-virus interaction</keyword>
<keyword id="KW-0378">Hydrolase</keyword>
<keyword id="KW-1104">Inhibition of host RNA polymerase II by virus</keyword>
<keyword id="KW-0464">Manganese</keyword>
<keyword id="KW-0479">Metal-binding</keyword>
<keyword id="KW-0540">Nuclease</keyword>
<keyword id="KW-0597">Phosphoprotein</keyword>
<keyword id="KW-0688">Ribosomal frameshifting</keyword>
<organism>
    <name type="scientific">Influenza A virus (strain A/Equine/Tennessee/5/1986 H3N8)</name>
    <dbReference type="NCBI Taxonomy" id="380339"/>
    <lineage>
        <taxon>Viruses</taxon>
        <taxon>Riboviria</taxon>
        <taxon>Orthornavirae</taxon>
        <taxon>Negarnaviricota</taxon>
        <taxon>Polyploviricotina</taxon>
        <taxon>Insthoviricetes</taxon>
        <taxon>Articulavirales</taxon>
        <taxon>Orthomyxoviridae</taxon>
        <taxon>Alphainfluenzavirus</taxon>
        <taxon>Alphainfluenzavirus influenzae</taxon>
        <taxon>Influenza A virus</taxon>
    </lineage>
</organism>
<sequence>MEDFVRQCFNPMIVELAEKAMKEYGEDPKIETNKFAAICTHLEVCFMYSDFHFINELGESVIIESGDPNALLKHRFEIIEGRDRTMAWTVVNSICNTTRAEKPKFLPDLYDYKENRFVEIGVTRREVHIYYLEKANKIKSEKTHIHIFSFTGEEMATKADYTLDEESRARIKTRLFTIRQEMASRGLWDSFRQSERGEETIEERFEITGTMRRLANYSLPPNFSSLENFRVYVDGFEPNGCIESKLSQMSKEVNARIEPFSKTTPRPLRIPGGPPCHQRSKFLLMDALKLSIEDPSHEGEGIPLYDAIKCMKTFFGWKEPSIVKPHEKGINPNYLQAWKQVLAELQDLENEEKDPKTKNMKKTSQLKWALGENMAPEKVDFEDCKDINDLKQYDSDEPETRSLASWIQSEFNKACELTDSSWIELDEIGEDIAPIEYIASMRRNYFTAEVSHCRATEYIMKGVYINTALLNASCAAMDEFQLIPMISKCRTKEGRRKTNLYGFIIKGRSHLRNDTDVVNFVSMEFSLTDPRFEPHKWEKYCVHEIGDMLLRTAVGQVSRPMFLYVRTNGTSKIKMKWGMEIRRCLLQSLQQIESMIEAESSVKEKDMTKEFFENKSETWPIGESPKGVEEGSIGKVCRTLLAKSVFNSLYASPQLEGFSAESRKLLLIVQALRDNLEPGTFDIGGLYESIEECLINDPWVLLNASWFNSFLTHALK</sequence>
<name>PA_I86A3</name>
<gene>
    <name evidence="2" type="primary">PA</name>
</gene>
<organismHost>
    <name type="scientific">Aves</name>
    <dbReference type="NCBI Taxonomy" id="8782"/>
</organismHost>
<organismHost>
    <name type="scientific">Equus caballus</name>
    <name type="common">Horse</name>
    <dbReference type="NCBI Taxonomy" id="9796"/>
</organismHost>
<protein>
    <recommendedName>
        <fullName evidence="2">Polymerase acidic protein</fullName>
        <ecNumber evidence="2">3.1.-.-</ecNumber>
    </recommendedName>
    <alternativeName>
        <fullName evidence="2">RNA-directed RNA polymerase subunit P2</fullName>
    </alternativeName>
</protein>
<evidence type="ECO:0000250" key="1">
    <source>
        <dbReference type="UniProtKB" id="P03433"/>
    </source>
</evidence>
<evidence type="ECO:0000255" key="2">
    <source>
        <dbReference type="HAMAP-Rule" id="MF_04063"/>
    </source>
</evidence>
<feature type="chain" id="PRO_0000078787" description="Polymerase acidic protein">
    <location>
        <begin position="1"/>
        <end position="716"/>
    </location>
</feature>
<feature type="short sequence motif" description="Nuclear localization signal 1 (NLS1)" evidence="1 2">
    <location>
        <begin position="124"/>
        <end position="139"/>
    </location>
</feature>
<feature type="short sequence motif" description="Nuclear localization signal 2 (NLS2)" evidence="1 2">
    <location>
        <begin position="184"/>
        <end position="247"/>
    </location>
</feature>
<feature type="binding site" evidence="2">
    <location>
        <position position="41"/>
    </location>
    <ligand>
        <name>Mn(2+)</name>
        <dbReference type="ChEBI" id="CHEBI:29035"/>
        <label>1</label>
    </ligand>
</feature>
<feature type="binding site" evidence="2">
    <location>
        <position position="80"/>
    </location>
    <ligand>
        <name>Mn(2+)</name>
        <dbReference type="ChEBI" id="CHEBI:29035"/>
        <label>2</label>
    </ligand>
</feature>
<feature type="binding site" evidence="2">
    <location>
        <position position="108"/>
    </location>
    <ligand>
        <name>Mn(2+)</name>
        <dbReference type="ChEBI" id="CHEBI:29035"/>
        <label>1</label>
    </ligand>
</feature>
<feature type="binding site" evidence="2">
    <location>
        <position position="108"/>
    </location>
    <ligand>
        <name>Mn(2+)</name>
        <dbReference type="ChEBI" id="CHEBI:29035"/>
        <label>2</label>
    </ligand>
</feature>
<feature type="binding site" evidence="2">
    <location>
        <position position="119"/>
    </location>
    <ligand>
        <name>Mn(2+)</name>
        <dbReference type="ChEBI" id="CHEBI:29035"/>
        <label>1</label>
    </ligand>
</feature>
<feature type="binding site" evidence="2">
    <location>
        <position position="120"/>
    </location>
    <ligand>
        <name>Mn(2+)</name>
        <dbReference type="ChEBI" id="CHEBI:29035"/>
        <label>1</label>
    </ligand>
</feature>
<dbReference type="EC" id="3.1.-.-" evidence="2"/>
<dbReference type="EMBL" id="M26082">
    <property type="protein sequence ID" value="AAA43113.1"/>
    <property type="molecule type" value="Genomic_RNA"/>
</dbReference>
<dbReference type="SMR" id="P13169"/>
<dbReference type="MEROPS" id="S62.001"/>
<dbReference type="GO" id="GO:0030430">
    <property type="term" value="C:host cell cytoplasm"/>
    <property type="evidence" value="ECO:0007669"/>
    <property type="project" value="UniProtKB-SubCell"/>
</dbReference>
<dbReference type="GO" id="GO:0042025">
    <property type="term" value="C:host cell nucleus"/>
    <property type="evidence" value="ECO:0007669"/>
    <property type="project" value="UniProtKB-SubCell"/>
</dbReference>
<dbReference type="GO" id="GO:0004519">
    <property type="term" value="F:endonuclease activity"/>
    <property type="evidence" value="ECO:0007669"/>
    <property type="project" value="UniProtKB-KW"/>
</dbReference>
<dbReference type="GO" id="GO:0046872">
    <property type="term" value="F:metal ion binding"/>
    <property type="evidence" value="ECO:0007669"/>
    <property type="project" value="UniProtKB-KW"/>
</dbReference>
<dbReference type="GO" id="GO:0003723">
    <property type="term" value="F:RNA binding"/>
    <property type="evidence" value="ECO:0007669"/>
    <property type="project" value="UniProtKB-UniRule"/>
</dbReference>
<dbReference type="GO" id="GO:0075526">
    <property type="term" value="P:cap snatching"/>
    <property type="evidence" value="ECO:0007669"/>
    <property type="project" value="UniProtKB-UniRule"/>
</dbReference>
<dbReference type="GO" id="GO:0006351">
    <property type="term" value="P:DNA-templated transcription"/>
    <property type="evidence" value="ECO:0007669"/>
    <property type="project" value="UniProtKB-UniRule"/>
</dbReference>
<dbReference type="GO" id="GO:0039657">
    <property type="term" value="P:symbiont-mediated suppression of host gene expression"/>
    <property type="evidence" value="ECO:0007669"/>
    <property type="project" value="UniProtKB-KW"/>
</dbReference>
<dbReference type="GO" id="GO:0039523">
    <property type="term" value="P:symbiont-mediated suppression of host mRNA transcription via inhibition of RNA polymerase II activity"/>
    <property type="evidence" value="ECO:0007669"/>
    <property type="project" value="UniProtKB-UniRule"/>
</dbReference>
<dbReference type="GO" id="GO:0039694">
    <property type="term" value="P:viral RNA genome replication"/>
    <property type="evidence" value="ECO:0007669"/>
    <property type="project" value="InterPro"/>
</dbReference>
<dbReference type="GO" id="GO:0075523">
    <property type="term" value="P:viral translational frameshifting"/>
    <property type="evidence" value="ECO:0007669"/>
    <property type="project" value="UniProtKB-KW"/>
</dbReference>
<dbReference type="FunFam" id="3.40.91.90:FF:000001">
    <property type="entry name" value="Polymerase acidic protein"/>
    <property type="match status" value="1"/>
</dbReference>
<dbReference type="Gene3D" id="3.40.91.90">
    <property type="entry name" value="Influenza RNA-dependent RNA polymerase subunit PA, endonuclease domain"/>
    <property type="match status" value="1"/>
</dbReference>
<dbReference type="HAMAP" id="MF_04063">
    <property type="entry name" value="INFV_PA"/>
    <property type="match status" value="1"/>
</dbReference>
<dbReference type="InterPro" id="IPR037534">
    <property type="entry name" value="INFV_PA"/>
</dbReference>
<dbReference type="InterPro" id="IPR001009">
    <property type="entry name" value="PA/PA-X"/>
</dbReference>
<dbReference type="InterPro" id="IPR038372">
    <property type="entry name" value="PA/PA-X_sf"/>
</dbReference>
<dbReference type="Pfam" id="PF00603">
    <property type="entry name" value="Flu_PA"/>
    <property type="match status" value="1"/>
</dbReference>
<reference key="1">
    <citation type="journal article" date="1989" name="Virology">
        <title>Evolutionary pathways of the PA genes of influenza A viruses.</title>
        <authorList>
            <person name="Okazaki K."/>
            <person name="Kawaoka Y."/>
            <person name="Webster R.G."/>
        </authorList>
    </citation>
    <scope>NUCLEOTIDE SEQUENCE [GENOMIC RNA]</scope>
</reference>